<feature type="chain" id="PRO_1000007590" description="Large ribosomal subunit protein uL29">
    <location>
        <begin position="1"/>
        <end position="71"/>
    </location>
</feature>
<keyword id="KW-0687">Ribonucleoprotein</keyword>
<keyword id="KW-0689">Ribosomal protein</keyword>
<proteinExistence type="inferred from homology"/>
<protein>
    <recommendedName>
        <fullName evidence="1">Large ribosomal subunit protein uL29</fullName>
    </recommendedName>
    <alternativeName>
        <fullName evidence="2">50S ribosomal protein L29</fullName>
    </alternativeName>
</protein>
<sequence>MNDLKLLRSKLSTETIEELYKNLNLLKKELFNLRFQQALGDLKNTSRFSLVKKSIARIKTELTKRANSEEY</sequence>
<organism>
    <name type="scientific">Rickettsia rickettsii (strain Sheila Smith)</name>
    <dbReference type="NCBI Taxonomy" id="392021"/>
    <lineage>
        <taxon>Bacteria</taxon>
        <taxon>Pseudomonadati</taxon>
        <taxon>Pseudomonadota</taxon>
        <taxon>Alphaproteobacteria</taxon>
        <taxon>Rickettsiales</taxon>
        <taxon>Rickettsiaceae</taxon>
        <taxon>Rickettsieae</taxon>
        <taxon>Rickettsia</taxon>
        <taxon>spotted fever group</taxon>
    </lineage>
</organism>
<comment type="similarity">
    <text evidence="1">Belongs to the universal ribosomal protein uL29 family.</text>
</comment>
<dbReference type="EMBL" id="CP000848">
    <property type="protein sequence ID" value="ABV76586.1"/>
    <property type="molecule type" value="Genomic_DNA"/>
</dbReference>
<dbReference type="RefSeq" id="WP_004997809.1">
    <property type="nucleotide sequence ID" value="NC_009882.1"/>
</dbReference>
<dbReference type="SMR" id="A8GT61"/>
<dbReference type="GeneID" id="34513696"/>
<dbReference type="GeneID" id="95361478"/>
<dbReference type="KEGG" id="rri:A1G_05515"/>
<dbReference type="HOGENOM" id="CLU_158491_1_0_5"/>
<dbReference type="Proteomes" id="UP000006832">
    <property type="component" value="Chromosome"/>
</dbReference>
<dbReference type="GO" id="GO:0022625">
    <property type="term" value="C:cytosolic large ribosomal subunit"/>
    <property type="evidence" value="ECO:0007669"/>
    <property type="project" value="TreeGrafter"/>
</dbReference>
<dbReference type="GO" id="GO:0003735">
    <property type="term" value="F:structural constituent of ribosome"/>
    <property type="evidence" value="ECO:0007669"/>
    <property type="project" value="InterPro"/>
</dbReference>
<dbReference type="GO" id="GO:0006412">
    <property type="term" value="P:translation"/>
    <property type="evidence" value="ECO:0007669"/>
    <property type="project" value="UniProtKB-UniRule"/>
</dbReference>
<dbReference type="CDD" id="cd00427">
    <property type="entry name" value="Ribosomal_L29_HIP"/>
    <property type="match status" value="1"/>
</dbReference>
<dbReference type="FunFam" id="1.10.287.310:FF:000001">
    <property type="entry name" value="50S ribosomal protein L29"/>
    <property type="match status" value="1"/>
</dbReference>
<dbReference type="Gene3D" id="1.10.287.310">
    <property type="match status" value="1"/>
</dbReference>
<dbReference type="HAMAP" id="MF_00374">
    <property type="entry name" value="Ribosomal_uL29"/>
    <property type="match status" value="1"/>
</dbReference>
<dbReference type="InterPro" id="IPR050063">
    <property type="entry name" value="Ribosomal_protein_uL29"/>
</dbReference>
<dbReference type="InterPro" id="IPR001854">
    <property type="entry name" value="Ribosomal_uL29"/>
</dbReference>
<dbReference type="InterPro" id="IPR018254">
    <property type="entry name" value="Ribosomal_uL29_CS"/>
</dbReference>
<dbReference type="InterPro" id="IPR036049">
    <property type="entry name" value="Ribosomal_uL29_sf"/>
</dbReference>
<dbReference type="NCBIfam" id="TIGR00012">
    <property type="entry name" value="L29"/>
    <property type="match status" value="1"/>
</dbReference>
<dbReference type="PANTHER" id="PTHR10916">
    <property type="entry name" value="60S RIBOSOMAL PROTEIN L35/50S RIBOSOMAL PROTEIN L29"/>
    <property type="match status" value="1"/>
</dbReference>
<dbReference type="PANTHER" id="PTHR10916:SF0">
    <property type="entry name" value="LARGE RIBOSOMAL SUBUNIT PROTEIN UL29C"/>
    <property type="match status" value="1"/>
</dbReference>
<dbReference type="Pfam" id="PF00831">
    <property type="entry name" value="Ribosomal_L29"/>
    <property type="match status" value="1"/>
</dbReference>
<dbReference type="SUPFAM" id="SSF46561">
    <property type="entry name" value="Ribosomal protein L29 (L29p)"/>
    <property type="match status" value="1"/>
</dbReference>
<dbReference type="PROSITE" id="PS00579">
    <property type="entry name" value="RIBOSOMAL_L29"/>
    <property type="match status" value="1"/>
</dbReference>
<reference key="1">
    <citation type="submission" date="2007-09" db="EMBL/GenBank/DDBJ databases">
        <title>Complete genome sequence of Rickettsia rickettsii.</title>
        <authorList>
            <person name="Madan A."/>
            <person name="Fahey J."/>
            <person name="Helton E."/>
            <person name="Ketteman M."/>
            <person name="Madan A."/>
            <person name="Rodrigues S."/>
            <person name="Sanchez A."/>
            <person name="Dasch G."/>
            <person name="Eremeeva M."/>
        </authorList>
    </citation>
    <scope>NUCLEOTIDE SEQUENCE [LARGE SCALE GENOMIC DNA]</scope>
    <source>
        <strain>Sheila Smith</strain>
    </source>
</reference>
<evidence type="ECO:0000255" key="1">
    <source>
        <dbReference type="HAMAP-Rule" id="MF_00374"/>
    </source>
</evidence>
<evidence type="ECO:0000305" key="2"/>
<gene>
    <name evidence="1" type="primary">rpmC</name>
    <name type="ordered locus">A1G_05515</name>
</gene>
<name>RL29_RICRS</name>
<accession>A8GT61</accession>